<gene>
    <name evidence="6" type="primary">mfmG</name>
    <name type="ORF">F4805DRAFT_30153</name>
</gene>
<reference key="1">
    <citation type="journal article" date="2022" name="New Phytol.">
        <title>Ecological generalism drives hyperdiversity of secondary metabolite gene clusters in xylarialean endophytes.</title>
        <authorList>
            <person name="Franco M.E.E."/>
            <person name="Wisecaver J.H."/>
            <person name="Arnold A.E."/>
            <person name="Ju Y.M."/>
            <person name="Slot J.C."/>
            <person name="Ahrendt S."/>
            <person name="Moore L.P."/>
            <person name="Eastman K.E."/>
            <person name="Scott K."/>
            <person name="Konkel Z."/>
            <person name="Mondo S.J."/>
            <person name="Kuo A."/>
            <person name="Hayes R.D."/>
            <person name="Haridas S."/>
            <person name="Andreopoulos B."/>
            <person name="Riley R."/>
            <person name="LaButti K."/>
            <person name="Pangilinan J."/>
            <person name="Lipzen A."/>
            <person name="Amirebrahimi M."/>
            <person name="Yan J."/>
            <person name="Adam C."/>
            <person name="Keymanesh K."/>
            <person name="Ng V."/>
            <person name="Louie K."/>
            <person name="Northen T."/>
            <person name="Drula E."/>
            <person name="Henrissat B."/>
            <person name="Hsieh H.M."/>
            <person name="Youens-Clark K."/>
            <person name="Lutzoni F."/>
            <person name="Miadlikowska J."/>
            <person name="Eastwood D.C."/>
            <person name="Hamelin R.C."/>
            <person name="Grigoriev I.V."/>
            <person name="U'Ren J.M."/>
        </authorList>
    </citation>
    <scope>NUCLEOTIDE SEQUENCE [GENOMIC DNA]</scope>
    <source>
        <strain>CBS 123579</strain>
    </source>
</reference>
<reference key="2">
    <citation type="journal article" date="2024" name="Chem. Sci.">
        <title>Global genome mining-driven discovery of an unusual biosynthetic logic for fungal polyketide-terpenoid hybrids.</title>
        <authorList>
            <person name="Yan D."/>
            <person name="Matsuda Y."/>
        </authorList>
    </citation>
    <scope>FUNCTION</scope>
    <source>
        <strain>CBS 123579</strain>
    </source>
</reference>
<sequence length="604" mass="64260">MYMLRPSSLLLATGLLNQGSSVLAAVISRASNQTFDYVIVGGGTAGLVLANRLTEDSSVTVAVVEAGTFPEDVVGNVTQVPAYAPQFEGAELDLEWNFTTTPQAGLGNIPVSYYRAKALGGCSDINFMAYGRTSKGAHQLWADLVGDDSYTYDNMVKYYKKTMNFSPPNAETRLANATPMYDTVDTSTGGGIDVTFPSFAQSWSTWVSKGLAAIGLPQAHSFVDGNLLGHSWQMVGITQSTGIRSSAQAGYLRPVMSRPNLTILNGTFAERIIFNGDAASGVEVTAKGQTYTLTSKKELILSAGVFQSPQLLMVSGVGPKALLDKFNIPVVKDLPGVGQNMVDHITVPLSYQVDVVTSSTLAGSSLEEAITEWNTHGTGPLSNNGGDYIGMEKAPAEFRANFSAETVKQLSALPEDWPELQYNVLPATVSSTSIGGEGSVLGGNYGSMLASVIAPQSRGNVSIASASMSDAPLINPNIFTAQADIDLLLTAFKRVRQALQSSAMAPIMIGDEFFPGPTVQTDEQILDYLTETVRPFSHGFATCKMGKSSDPDAVIDSHGKVYGIKNLRVVDASSFPFLPPGPAPQIQVYTLAEKLADDIKQTKY</sequence>
<accession>P0DY22</accession>
<organism>
    <name type="scientific">Annulohypoxylon moriforme</name>
    <name type="common">Filamentous fungus</name>
    <name type="synonym">Hypoxylon moriforme</name>
    <dbReference type="NCBI Taxonomy" id="326622"/>
    <lineage>
        <taxon>Eukaryota</taxon>
        <taxon>Fungi</taxon>
        <taxon>Dikarya</taxon>
        <taxon>Ascomycota</taxon>
        <taxon>Pezizomycotina</taxon>
        <taxon>Sordariomycetes</taxon>
        <taxon>Xylariomycetidae</taxon>
        <taxon>Xylariales</taxon>
        <taxon>Hypoxylaceae</taxon>
        <taxon>Annulohypoxylon</taxon>
    </lineage>
</organism>
<comment type="function">
    <text evidence="5">Oxidoreductase; part of the gene cluster that mediates the biosynthesis of the phthalide-terpenoid hybrid 11'-O-desmethylfendlerol (PubMed:38404388). MfmG seems not to be involved directly in the biosynthesis of 11'-O-desmethylfendlerol and its role has still to be determined (PubMed:38404388). The biosynthesis of 11'-O-desmethylfendlerol begins with the NR-PKS mfmB that forms 3,5-dimethylorsellinic acid (DMOA), which is then transformed into the phthalide 5,7-dihydroxy-4-(hydroxymethyl)-6-methylphthalide by the cytochrome P450 monooxygenase mfmA and the hydrolase mfmC. Subsequently, the methyltransferase mfmE catalyzes 7-O-methylation to yield 5-hydroxy-4-(hydroxymethyl)-7-methoxy-6-methylphthalide, which undergoes C-3 hydroxylation by the cytochrome P450 monooxygenase mfmF. The resultant cyclopolic acid (2,5-dihydroxy-4-(hydroxymethyl)-7-methoxy-6-methylphthalide) is then farnesylated by the DMATS-type prenyltransferase mfmD to afford 5-O-farnesylcyclopolic acid. Finally, the Pyr4-family terpene cyclase mfmH cyclizes the farnesyl moiety of 5-O-farnesylcyclopolic acid into a drimane-like structure, thus completing the biosynthesis of 11'-O-desmethylfendlerol (PubMed:38404388).</text>
</comment>
<comment type="cofactor">
    <cofactor evidence="1">
        <name>FAD</name>
        <dbReference type="ChEBI" id="CHEBI:57692"/>
    </cofactor>
</comment>
<comment type="subunit">
    <text evidence="2">Homodimer.</text>
</comment>
<comment type="similarity">
    <text evidence="7">Belongs to the GMC oxidoreductase family.</text>
</comment>
<evidence type="ECO:0000250" key="1">
    <source>
        <dbReference type="UniProtKB" id="E4QP00"/>
    </source>
</evidence>
<evidence type="ECO:0000250" key="2">
    <source>
        <dbReference type="UniProtKB" id="Q12062"/>
    </source>
</evidence>
<evidence type="ECO:0000255" key="3"/>
<evidence type="ECO:0000255" key="4">
    <source>
        <dbReference type="PROSITE-ProRule" id="PRU00498"/>
    </source>
</evidence>
<evidence type="ECO:0000269" key="5">
    <source>
    </source>
</evidence>
<evidence type="ECO:0000303" key="6">
    <source>
    </source>
</evidence>
<evidence type="ECO:0000305" key="7"/>
<proteinExistence type="inferred from homology"/>
<feature type="signal peptide" evidence="3">
    <location>
        <begin position="1"/>
        <end position="24"/>
    </location>
</feature>
<feature type="chain" id="PRO_0000461996" description="Glucose-methanol-choline family oxidoreductase mfmG">
    <location>
        <begin position="25"/>
        <end position="604"/>
    </location>
</feature>
<feature type="active site" description="Proton acceptor" evidence="1">
    <location>
        <position position="538"/>
    </location>
</feature>
<feature type="binding site" evidence="1">
    <location>
        <begin position="44"/>
        <end position="45"/>
    </location>
    <ligand>
        <name>FAD</name>
        <dbReference type="ChEBI" id="CHEBI:57692"/>
    </ligand>
</feature>
<feature type="binding site" evidence="1">
    <location>
        <begin position="65"/>
        <end position="66"/>
    </location>
    <ligand>
        <name>FAD</name>
        <dbReference type="ChEBI" id="CHEBI:57692"/>
    </ligand>
</feature>
<feature type="binding site" evidence="1">
    <location>
        <begin position="126"/>
        <end position="129"/>
    </location>
    <ligand>
        <name>FAD</name>
        <dbReference type="ChEBI" id="CHEBI:57692"/>
    </ligand>
</feature>
<feature type="binding site" evidence="1">
    <location>
        <position position="572"/>
    </location>
    <ligand>
        <name>FAD</name>
        <dbReference type="ChEBI" id="CHEBI:57692"/>
    </ligand>
</feature>
<feature type="binding site" evidence="1">
    <location>
        <begin position="584"/>
        <end position="585"/>
    </location>
    <ligand>
        <name>FAD</name>
        <dbReference type="ChEBI" id="CHEBI:57692"/>
    </ligand>
</feature>
<feature type="glycosylation site" description="N-linked (GlcNAc...) asparagine" evidence="4">
    <location>
        <position position="32"/>
    </location>
</feature>
<feature type="glycosylation site" description="N-linked (GlcNAc...) asparagine" evidence="4">
    <location>
        <position position="76"/>
    </location>
</feature>
<feature type="glycosylation site" description="N-linked (GlcNAc...) asparagine" evidence="4">
    <location>
        <position position="97"/>
    </location>
</feature>
<feature type="glycosylation site" description="N-linked (GlcNAc...) asparagine" evidence="4">
    <location>
        <position position="260"/>
    </location>
</feature>
<feature type="glycosylation site" description="N-linked (GlcNAc...) asparagine" evidence="4">
    <location>
        <position position="265"/>
    </location>
</feature>
<feature type="glycosylation site" description="N-linked (GlcNAc...) asparagine" evidence="4">
    <location>
        <position position="401"/>
    </location>
</feature>
<feature type="glycosylation site" description="N-linked (GlcNAc...) asparagine" evidence="4">
    <location>
        <position position="460"/>
    </location>
</feature>
<keyword id="KW-0274">FAD</keyword>
<keyword id="KW-0285">Flavoprotein</keyword>
<keyword id="KW-0325">Glycoprotein</keyword>
<keyword id="KW-0560">Oxidoreductase</keyword>
<keyword id="KW-0732">Signal</keyword>
<name>MFMG_ANNMO</name>
<dbReference type="EC" id="1.1.-.-" evidence="5"/>
<dbReference type="EMBL" id="MU403194">
    <property type="protein sequence ID" value="KAI1452418.1"/>
    <property type="molecule type" value="Genomic_DNA"/>
</dbReference>
<dbReference type="Gene3D" id="3.50.50.60">
    <property type="entry name" value="FAD/NAD(P)-binding domain"/>
    <property type="match status" value="1"/>
</dbReference>
<dbReference type="Gene3D" id="3.30.560.10">
    <property type="entry name" value="Glucose Oxidase, domain 3"/>
    <property type="match status" value="1"/>
</dbReference>
<dbReference type="InterPro" id="IPR036188">
    <property type="entry name" value="FAD/NAD-bd_sf"/>
</dbReference>
<dbReference type="InterPro" id="IPR012132">
    <property type="entry name" value="GMC_OxRdtase"/>
</dbReference>
<dbReference type="InterPro" id="IPR000172">
    <property type="entry name" value="GMC_OxRdtase_N"/>
</dbReference>
<dbReference type="InterPro" id="IPR007867">
    <property type="entry name" value="GMC_OxRtase_C"/>
</dbReference>
<dbReference type="PANTHER" id="PTHR11552:SF138">
    <property type="entry name" value="DEHYDROGENASE PKFF-RELATED"/>
    <property type="match status" value="1"/>
</dbReference>
<dbReference type="PANTHER" id="PTHR11552">
    <property type="entry name" value="GLUCOSE-METHANOL-CHOLINE GMC OXIDOREDUCTASE"/>
    <property type="match status" value="1"/>
</dbReference>
<dbReference type="Pfam" id="PF05199">
    <property type="entry name" value="GMC_oxred_C"/>
    <property type="match status" value="1"/>
</dbReference>
<dbReference type="Pfam" id="PF00732">
    <property type="entry name" value="GMC_oxred_N"/>
    <property type="match status" value="1"/>
</dbReference>
<dbReference type="PIRSF" id="PIRSF000137">
    <property type="entry name" value="Alcohol_oxidase"/>
    <property type="match status" value="1"/>
</dbReference>
<dbReference type="SUPFAM" id="SSF54373">
    <property type="entry name" value="FAD-linked reductases, C-terminal domain"/>
    <property type="match status" value="1"/>
</dbReference>
<dbReference type="SUPFAM" id="SSF51905">
    <property type="entry name" value="FAD/NAD(P)-binding domain"/>
    <property type="match status" value="1"/>
</dbReference>
<protein>
    <recommendedName>
        <fullName evidence="6">Glucose-methanol-choline family oxidoreductase mfmG</fullName>
        <ecNumber evidence="5">1.1.-.-</ecNumber>
    </recommendedName>
    <alternativeName>
        <fullName evidence="6">11'-O-desmethylfendlerol biosynthesis cluster protein G</fullName>
    </alternativeName>
</protein>